<comment type="function">
    <text>DNA-binding protein that specifically binds heat shock promoter elements (HSE) and activates transcription. In higher eukaryotes, HSF is unable to bind to the HSE unless the cells are heat shocked.</text>
</comment>
<comment type="subunit">
    <text>DNA-binding homotrimer in stressed or heat shocked cells, otherwise found as a homodimer.</text>
</comment>
<comment type="interaction">
    <interactant intactId="EBI-2556750">
        <id>Q03933</id>
    </interactant>
    <interactant intactId="EBI-355275">
        <id>O95816</id>
        <label>BAG2</label>
    </interactant>
    <organismsDiffer>false</organismsDiffer>
    <experiments>2</experiments>
</comment>
<comment type="interaction">
    <interactant intactId="EBI-2556750">
        <id>Q03933</id>
    </interactant>
    <interactant intactId="EBI-2949658">
        <id>O95429</id>
        <label>BAG4</label>
    </interactant>
    <organismsDiffer>false</organismsDiffer>
    <experiments>2</experiments>
</comment>
<comment type="interaction">
    <interactant intactId="EBI-2556750">
        <id>Q03933</id>
    </interactant>
    <interactant intactId="EBI-742887">
        <id>Q8TAP6</id>
        <label>CEP76</label>
    </interactant>
    <organismsDiffer>false</organismsDiffer>
    <experiments>3</experiments>
</comment>
<comment type="interaction">
    <interactant intactId="EBI-2556750">
        <id>Q03933</id>
    </interactant>
    <interactant intactId="EBI-1048152">
        <id>Q9Y315</id>
        <label>DERA</label>
    </interactant>
    <organismsDiffer>false</organismsDiffer>
    <experiments>3</experiments>
</comment>
<comment type="interaction">
    <interactant intactId="EBI-2556750">
        <id>Q03933</id>
    </interactant>
    <interactant intactId="EBI-719620">
        <id>Q00613</id>
        <label>HSF1</label>
    </interactant>
    <organismsDiffer>false</organismsDiffer>
    <experiments>11</experiments>
</comment>
<comment type="interaction">
    <interactant intactId="EBI-2556750">
        <id>Q03933</id>
    </interactant>
    <interactant intactId="EBI-7116203">
        <id>O75031</id>
        <label>HSF2BP</label>
    </interactant>
    <organismsDiffer>false</organismsDiffer>
    <experiments>4</experiments>
</comment>
<comment type="interaction">
    <interactant intactId="EBI-2556750">
        <id>Q03933</id>
    </interactant>
    <interactant intactId="EBI-356991">
        <id>P54652</id>
        <label>HSPA2</label>
    </interactant>
    <organismsDiffer>false</organismsDiffer>
    <experiments>2</experiments>
</comment>
<comment type="interaction">
    <interactant intactId="EBI-2556750">
        <id>Q03933</id>
    </interactant>
    <interactant intactId="EBI-11522433">
        <id>Q5JR59-3</id>
        <label>MTUS2</label>
    </interactant>
    <organismsDiffer>false</organismsDiffer>
    <experiments>3</experiments>
</comment>
<comment type="interaction">
    <interactant intactId="EBI-2556750">
        <id>Q03933</id>
    </interactant>
    <interactant intactId="EBI-347978">
        <id>P37198</id>
        <label>NUP62</label>
    </interactant>
    <organismsDiffer>false</organismsDiffer>
    <experiments>5</experiments>
</comment>
<comment type="interaction">
    <interactant intactId="EBI-2556750">
        <id>Q03933</id>
    </interactant>
    <interactant intactId="EBI-79165">
        <id>Q9NRD5</id>
        <label>PICK1</label>
    </interactant>
    <organismsDiffer>false</organismsDiffer>
    <experiments>6</experiments>
</comment>
<comment type="interaction">
    <interactant intactId="EBI-2556750">
        <id>Q03933</id>
    </interactant>
    <interactant intactId="EBI-355607">
        <id>P06753</id>
        <label>TPM3</label>
    </interactant>
    <organismsDiffer>false</organismsDiffer>
    <experiments>10</experiments>
</comment>
<comment type="interaction">
    <interactant intactId="EBI-2556750">
        <id>Q03933</id>
    </interactant>
    <interactant intactId="EBI-10184033">
        <id>Q5VU62</id>
        <label>TPM3</label>
    </interactant>
    <organismsDiffer>false</organismsDiffer>
    <experiments>3</experiments>
</comment>
<comment type="interaction">
    <interactant intactId="EBI-2556750">
        <id>Q03933</id>
    </interactant>
    <interactant intactId="EBI-540834">
        <id>P61964</id>
        <label>WDR5</label>
    </interactant>
    <organismsDiffer>false</organismsDiffer>
    <experiments>7</experiments>
</comment>
<comment type="interaction">
    <interactant intactId="EBI-10223348">
        <id>Q03933-2</id>
    </interactant>
    <interactant intactId="EBI-399080">
        <id>Q92993</id>
        <label>KAT5</label>
    </interactant>
    <organismsDiffer>false</organismsDiffer>
    <experiments>3</experiments>
</comment>
<comment type="interaction">
    <interactant intactId="EBI-10223348">
        <id>Q03933-2</id>
    </interactant>
    <interactant intactId="EBI-11742507">
        <id>Q8TAP4-4</id>
        <label>LMO3</label>
    </interactant>
    <organismsDiffer>false</organismsDiffer>
    <experiments>3</experiments>
</comment>
<comment type="interaction">
    <interactant intactId="EBI-10223348">
        <id>Q03933-2</id>
    </interactant>
    <interactant intactId="EBI-742948">
        <id>Q5JR59</id>
        <label>MTUS2</label>
    </interactant>
    <organismsDiffer>false</organismsDiffer>
    <experiments>3</experiments>
</comment>
<comment type="interaction">
    <interactant intactId="EBI-10223348">
        <id>Q03933-2</id>
    </interactant>
    <interactant intactId="EBI-347978">
        <id>P37198</id>
        <label>NUP62</label>
    </interactant>
    <organismsDiffer>false</organismsDiffer>
    <experiments>3</experiments>
</comment>
<comment type="interaction">
    <interactant intactId="EBI-10223348">
        <id>Q03933-2</id>
    </interactant>
    <interactant intactId="EBI-9090795">
        <id>Q15047-2</id>
        <label>SETDB1</label>
    </interactant>
    <organismsDiffer>false</organismsDiffer>
    <experiments>3</experiments>
</comment>
<comment type="interaction">
    <interactant intactId="EBI-10223348">
        <id>Q03933-2</id>
    </interactant>
    <interactant intactId="EBI-359832">
        <id>P61981</id>
        <label>YWHAG</label>
    </interactant>
    <organismsDiffer>false</organismsDiffer>
    <experiments>3</experiments>
</comment>
<comment type="subcellular location">
    <subcellularLocation>
        <location evidence="4">Cytoplasm</location>
    </subcellularLocation>
    <subcellularLocation>
        <location evidence="4">Nucleus</location>
    </subcellularLocation>
    <text>Cytoplasmic during normal growth and moves to the nucleus upon activation.</text>
</comment>
<comment type="alternative products">
    <event type="alternative splicing"/>
    <isoform>
        <id>Q03933-1</id>
        <name>1</name>
        <sequence type="displayed"/>
    </isoform>
    <isoform>
        <id>Q03933-2</id>
        <name>2</name>
        <sequence type="described" ref="VSP_041128"/>
    </isoform>
</comment>
<comment type="similarity">
    <text evidence="7">Belongs to the HSF family.</text>
</comment>
<reference key="1">
    <citation type="journal article" date="1991" name="Proc. Natl. Acad. Sci. U.S.A.">
        <title>Isolation of a cDNA for HSF2: evidence for two heat shock factor genes in humans.</title>
        <authorList>
            <person name="Schuetz T.J."/>
            <person name="Gallo G.J."/>
            <person name="Sheldon L."/>
            <person name="Tempst P."/>
            <person name="Kingston R.E."/>
        </authorList>
    </citation>
    <scope>NUCLEOTIDE SEQUENCE [MRNA] (ISOFORM 1)</scope>
    <scope>PROTEIN SEQUENCE OF 65-71</scope>
</reference>
<reference key="2">
    <citation type="submission" date="2006-04" db="EMBL/GenBank/DDBJ databases">
        <authorList>
            <consortium name="NIEHS SNPs program"/>
        </authorList>
    </citation>
    <scope>NUCLEOTIDE SEQUENCE [GENOMIC DNA]</scope>
</reference>
<reference key="3">
    <citation type="journal article" date="2004" name="Nat. Genet.">
        <title>Complete sequencing and characterization of 21,243 full-length human cDNAs.</title>
        <authorList>
            <person name="Ota T."/>
            <person name="Suzuki Y."/>
            <person name="Nishikawa T."/>
            <person name="Otsuki T."/>
            <person name="Sugiyama T."/>
            <person name="Irie R."/>
            <person name="Wakamatsu A."/>
            <person name="Hayashi K."/>
            <person name="Sato H."/>
            <person name="Nagai K."/>
            <person name="Kimura K."/>
            <person name="Makita H."/>
            <person name="Sekine M."/>
            <person name="Obayashi M."/>
            <person name="Nishi T."/>
            <person name="Shibahara T."/>
            <person name="Tanaka T."/>
            <person name="Ishii S."/>
            <person name="Yamamoto J."/>
            <person name="Saito K."/>
            <person name="Kawai Y."/>
            <person name="Isono Y."/>
            <person name="Nakamura Y."/>
            <person name="Nagahari K."/>
            <person name="Murakami K."/>
            <person name="Yasuda T."/>
            <person name="Iwayanagi T."/>
            <person name="Wagatsuma M."/>
            <person name="Shiratori A."/>
            <person name="Sudo H."/>
            <person name="Hosoiri T."/>
            <person name="Kaku Y."/>
            <person name="Kodaira H."/>
            <person name="Kondo H."/>
            <person name="Sugawara M."/>
            <person name="Takahashi M."/>
            <person name="Kanda K."/>
            <person name="Yokoi T."/>
            <person name="Furuya T."/>
            <person name="Kikkawa E."/>
            <person name="Omura Y."/>
            <person name="Abe K."/>
            <person name="Kamihara K."/>
            <person name="Katsuta N."/>
            <person name="Sato K."/>
            <person name="Tanikawa M."/>
            <person name="Yamazaki M."/>
            <person name="Ninomiya K."/>
            <person name="Ishibashi T."/>
            <person name="Yamashita H."/>
            <person name="Murakawa K."/>
            <person name="Fujimori K."/>
            <person name="Tanai H."/>
            <person name="Kimata M."/>
            <person name="Watanabe M."/>
            <person name="Hiraoka S."/>
            <person name="Chiba Y."/>
            <person name="Ishida S."/>
            <person name="Ono Y."/>
            <person name="Takiguchi S."/>
            <person name="Watanabe S."/>
            <person name="Yosida M."/>
            <person name="Hotuta T."/>
            <person name="Kusano J."/>
            <person name="Kanehori K."/>
            <person name="Takahashi-Fujii A."/>
            <person name="Hara H."/>
            <person name="Tanase T.-O."/>
            <person name="Nomura Y."/>
            <person name="Togiya S."/>
            <person name="Komai F."/>
            <person name="Hara R."/>
            <person name="Takeuchi K."/>
            <person name="Arita M."/>
            <person name="Imose N."/>
            <person name="Musashino K."/>
            <person name="Yuuki H."/>
            <person name="Oshima A."/>
            <person name="Sasaki N."/>
            <person name="Aotsuka S."/>
            <person name="Yoshikawa Y."/>
            <person name="Matsunawa H."/>
            <person name="Ichihara T."/>
            <person name="Shiohata N."/>
            <person name="Sano S."/>
            <person name="Moriya S."/>
            <person name="Momiyama H."/>
            <person name="Satoh N."/>
            <person name="Takami S."/>
            <person name="Terashima Y."/>
            <person name="Suzuki O."/>
            <person name="Nakagawa S."/>
            <person name="Senoh A."/>
            <person name="Mizoguchi H."/>
            <person name="Goto Y."/>
            <person name="Shimizu F."/>
            <person name="Wakebe H."/>
            <person name="Hishigaki H."/>
            <person name="Watanabe T."/>
            <person name="Sugiyama A."/>
            <person name="Takemoto M."/>
            <person name="Kawakami B."/>
            <person name="Yamazaki M."/>
            <person name="Watanabe K."/>
            <person name="Kumagai A."/>
            <person name="Itakura S."/>
            <person name="Fukuzumi Y."/>
            <person name="Fujimori Y."/>
            <person name="Komiyama M."/>
            <person name="Tashiro H."/>
            <person name="Tanigami A."/>
            <person name="Fujiwara T."/>
            <person name="Ono T."/>
            <person name="Yamada K."/>
            <person name="Fujii Y."/>
            <person name="Ozaki K."/>
            <person name="Hirao M."/>
            <person name="Ohmori Y."/>
            <person name="Kawabata A."/>
            <person name="Hikiji T."/>
            <person name="Kobatake N."/>
            <person name="Inagaki H."/>
            <person name="Ikema Y."/>
            <person name="Okamoto S."/>
            <person name="Okitani R."/>
            <person name="Kawakami T."/>
            <person name="Noguchi S."/>
            <person name="Itoh T."/>
            <person name="Shigeta K."/>
            <person name="Senba T."/>
            <person name="Matsumura K."/>
            <person name="Nakajima Y."/>
            <person name="Mizuno T."/>
            <person name="Morinaga M."/>
            <person name="Sasaki M."/>
            <person name="Togashi T."/>
            <person name="Oyama M."/>
            <person name="Hata H."/>
            <person name="Watanabe M."/>
            <person name="Komatsu T."/>
            <person name="Mizushima-Sugano J."/>
            <person name="Satoh T."/>
            <person name="Shirai Y."/>
            <person name="Takahashi Y."/>
            <person name="Nakagawa K."/>
            <person name="Okumura K."/>
            <person name="Nagase T."/>
            <person name="Nomura N."/>
            <person name="Kikuchi H."/>
            <person name="Masuho Y."/>
            <person name="Yamashita R."/>
            <person name="Nakai K."/>
            <person name="Yada T."/>
            <person name="Nakamura Y."/>
            <person name="Ohara O."/>
            <person name="Isogai T."/>
            <person name="Sugano S."/>
        </authorList>
    </citation>
    <scope>NUCLEOTIDE SEQUENCE [LARGE SCALE MRNA] (ISOFORM 2)</scope>
    <source>
        <tissue>Brain</tissue>
    </source>
</reference>
<reference key="4">
    <citation type="journal article" date="2003" name="Nature">
        <title>The DNA sequence and analysis of human chromosome 6.</title>
        <authorList>
            <person name="Mungall A.J."/>
            <person name="Palmer S.A."/>
            <person name="Sims S.K."/>
            <person name="Edwards C.A."/>
            <person name="Ashurst J.L."/>
            <person name="Wilming L."/>
            <person name="Jones M.C."/>
            <person name="Horton R."/>
            <person name="Hunt S.E."/>
            <person name="Scott C.E."/>
            <person name="Gilbert J.G.R."/>
            <person name="Clamp M.E."/>
            <person name="Bethel G."/>
            <person name="Milne S."/>
            <person name="Ainscough R."/>
            <person name="Almeida J.P."/>
            <person name="Ambrose K.D."/>
            <person name="Andrews T.D."/>
            <person name="Ashwell R.I.S."/>
            <person name="Babbage A.K."/>
            <person name="Bagguley C.L."/>
            <person name="Bailey J."/>
            <person name="Banerjee R."/>
            <person name="Barker D.J."/>
            <person name="Barlow K.F."/>
            <person name="Bates K."/>
            <person name="Beare D.M."/>
            <person name="Beasley H."/>
            <person name="Beasley O."/>
            <person name="Bird C.P."/>
            <person name="Blakey S.E."/>
            <person name="Bray-Allen S."/>
            <person name="Brook J."/>
            <person name="Brown A.J."/>
            <person name="Brown J.Y."/>
            <person name="Burford D.C."/>
            <person name="Burrill W."/>
            <person name="Burton J."/>
            <person name="Carder C."/>
            <person name="Carter N.P."/>
            <person name="Chapman J.C."/>
            <person name="Clark S.Y."/>
            <person name="Clark G."/>
            <person name="Clee C.M."/>
            <person name="Clegg S."/>
            <person name="Cobley V."/>
            <person name="Collier R.E."/>
            <person name="Collins J.E."/>
            <person name="Colman L.K."/>
            <person name="Corby N.R."/>
            <person name="Coville G.J."/>
            <person name="Culley K.M."/>
            <person name="Dhami P."/>
            <person name="Davies J."/>
            <person name="Dunn M."/>
            <person name="Earthrowl M.E."/>
            <person name="Ellington A.E."/>
            <person name="Evans K.A."/>
            <person name="Faulkner L."/>
            <person name="Francis M.D."/>
            <person name="Frankish A."/>
            <person name="Frankland J."/>
            <person name="French L."/>
            <person name="Garner P."/>
            <person name="Garnett J."/>
            <person name="Ghori M.J."/>
            <person name="Gilby L.M."/>
            <person name="Gillson C.J."/>
            <person name="Glithero R.J."/>
            <person name="Grafham D.V."/>
            <person name="Grant M."/>
            <person name="Gribble S."/>
            <person name="Griffiths C."/>
            <person name="Griffiths M.N.D."/>
            <person name="Hall R."/>
            <person name="Halls K.S."/>
            <person name="Hammond S."/>
            <person name="Harley J.L."/>
            <person name="Hart E.A."/>
            <person name="Heath P.D."/>
            <person name="Heathcott R."/>
            <person name="Holmes S.J."/>
            <person name="Howden P.J."/>
            <person name="Howe K.L."/>
            <person name="Howell G.R."/>
            <person name="Huckle E."/>
            <person name="Humphray S.J."/>
            <person name="Humphries M.D."/>
            <person name="Hunt A.R."/>
            <person name="Johnson C.M."/>
            <person name="Joy A.A."/>
            <person name="Kay M."/>
            <person name="Keenan S.J."/>
            <person name="Kimberley A.M."/>
            <person name="King A."/>
            <person name="Laird G.K."/>
            <person name="Langford C."/>
            <person name="Lawlor S."/>
            <person name="Leongamornlert D.A."/>
            <person name="Leversha M."/>
            <person name="Lloyd C.R."/>
            <person name="Lloyd D.M."/>
            <person name="Loveland J.E."/>
            <person name="Lovell J."/>
            <person name="Martin S."/>
            <person name="Mashreghi-Mohammadi M."/>
            <person name="Maslen G.L."/>
            <person name="Matthews L."/>
            <person name="McCann O.T."/>
            <person name="McLaren S.J."/>
            <person name="McLay K."/>
            <person name="McMurray A."/>
            <person name="Moore M.J.F."/>
            <person name="Mullikin J.C."/>
            <person name="Niblett D."/>
            <person name="Nickerson T."/>
            <person name="Novik K.L."/>
            <person name="Oliver K."/>
            <person name="Overton-Larty E.K."/>
            <person name="Parker A."/>
            <person name="Patel R."/>
            <person name="Pearce A.V."/>
            <person name="Peck A.I."/>
            <person name="Phillimore B.J.C.T."/>
            <person name="Phillips S."/>
            <person name="Plumb R.W."/>
            <person name="Porter K.M."/>
            <person name="Ramsey Y."/>
            <person name="Ranby S.A."/>
            <person name="Rice C.M."/>
            <person name="Ross M.T."/>
            <person name="Searle S.M."/>
            <person name="Sehra H.K."/>
            <person name="Sheridan E."/>
            <person name="Skuce C.D."/>
            <person name="Smith S."/>
            <person name="Smith M."/>
            <person name="Spraggon L."/>
            <person name="Squares S.L."/>
            <person name="Steward C.A."/>
            <person name="Sycamore N."/>
            <person name="Tamlyn-Hall G."/>
            <person name="Tester J."/>
            <person name="Theaker A.J."/>
            <person name="Thomas D.W."/>
            <person name="Thorpe A."/>
            <person name="Tracey A."/>
            <person name="Tromans A."/>
            <person name="Tubby B."/>
            <person name="Wall M."/>
            <person name="Wallis J.M."/>
            <person name="West A.P."/>
            <person name="White S.S."/>
            <person name="Whitehead S.L."/>
            <person name="Whittaker H."/>
            <person name="Wild A."/>
            <person name="Willey D.J."/>
            <person name="Wilmer T.E."/>
            <person name="Wood J.M."/>
            <person name="Wray P.W."/>
            <person name="Wyatt J.C."/>
            <person name="Young L."/>
            <person name="Younger R.M."/>
            <person name="Bentley D.R."/>
            <person name="Coulson A."/>
            <person name="Durbin R.M."/>
            <person name="Hubbard T."/>
            <person name="Sulston J.E."/>
            <person name="Dunham I."/>
            <person name="Rogers J."/>
            <person name="Beck S."/>
        </authorList>
    </citation>
    <scope>NUCLEOTIDE SEQUENCE [LARGE SCALE GENOMIC DNA]</scope>
</reference>
<reference key="5">
    <citation type="submission" date="2005-09" db="EMBL/GenBank/DDBJ databases">
        <authorList>
            <person name="Mural R.J."/>
            <person name="Istrail S."/>
            <person name="Sutton G.G."/>
            <person name="Florea L."/>
            <person name="Halpern A.L."/>
            <person name="Mobarry C.M."/>
            <person name="Lippert R."/>
            <person name="Walenz B."/>
            <person name="Shatkay H."/>
            <person name="Dew I."/>
            <person name="Miller J.R."/>
            <person name="Flanigan M.J."/>
            <person name="Edwards N.J."/>
            <person name="Bolanos R."/>
            <person name="Fasulo D."/>
            <person name="Halldorsson B.V."/>
            <person name="Hannenhalli S."/>
            <person name="Turner R."/>
            <person name="Yooseph S."/>
            <person name="Lu F."/>
            <person name="Nusskern D.R."/>
            <person name="Shue B.C."/>
            <person name="Zheng X.H."/>
            <person name="Zhong F."/>
            <person name="Delcher A.L."/>
            <person name="Huson D.H."/>
            <person name="Kravitz S.A."/>
            <person name="Mouchard L."/>
            <person name="Reinert K."/>
            <person name="Remington K.A."/>
            <person name="Clark A.G."/>
            <person name="Waterman M.S."/>
            <person name="Eichler E.E."/>
            <person name="Adams M.D."/>
            <person name="Hunkapiller M.W."/>
            <person name="Myers E.W."/>
            <person name="Venter J.C."/>
        </authorList>
    </citation>
    <scope>NUCLEOTIDE SEQUENCE [LARGE SCALE GENOMIC DNA]</scope>
</reference>
<reference key="6">
    <citation type="journal article" date="2004" name="Genome Res.">
        <title>The status, quality, and expansion of the NIH full-length cDNA project: the Mammalian Gene Collection (MGC).</title>
        <authorList>
            <consortium name="The MGC Project Team"/>
        </authorList>
    </citation>
    <scope>NUCLEOTIDE SEQUENCE [LARGE SCALE MRNA] (ISOFORMS 1 AND 2)</scope>
</reference>
<reference key="7">
    <citation type="journal article" date="1993" name="Genes Dev.">
        <title>Hydrophobic coiled-coil domains regulate the subcellular localization of human heat shock factor 2.</title>
        <authorList>
            <person name="Sheldon L."/>
            <person name="Kingston R.E."/>
        </authorList>
    </citation>
    <scope>SUBCELLULAR LOCATION</scope>
    <scope>MUTAGENESIS</scope>
</reference>
<reference key="8">
    <citation type="journal article" date="2014" name="Nat. Struct. Mol. Biol.">
        <title>Uncovering global SUMOylation signaling networks in a site-specific manner.</title>
        <authorList>
            <person name="Hendriks I.A."/>
            <person name="D'Souza R.C."/>
            <person name="Yang B."/>
            <person name="Verlaan-de Vries M."/>
            <person name="Mann M."/>
            <person name="Vertegaal A.C."/>
        </authorList>
    </citation>
    <scope>SUMOYLATION [LARGE SCALE ANALYSIS] AT LYS-82 AND LYS-139</scope>
    <scope>IDENTIFICATION BY MASS SPECTROMETRY [LARGE SCALE ANALYSIS]</scope>
</reference>
<reference key="9">
    <citation type="journal article" date="2015" name="Cell Rep.">
        <title>SUMO-2 orchestrates chromatin modifiers in response to DNA damage.</title>
        <authorList>
            <person name="Hendriks I.A."/>
            <person name="Treffers L.W."/>
            <person name="Verlaan-de Vries M."/>
            <person name="Olsen J.V."/>
            <person name="Vertegaal A.C."/>
        </authorList>
    </citation>
    <scope>SUMOYLATION [LARGE SCALE ANALYSIS] AT LYS-82 AND LYS-139</scope>
    <scope>IDENTIFICATION BY MASS SPECTROMETRY [LARGE SCALE ANALYSIS]</scope>
</reference>
<reference key="10">
    <citation type="journal article" date="2015" name="Mol. Cell. Proteomics">
        <title>System-wide analysis of SUMOylation dynamics in response to replication stress reveals novel small ubiquitin-like modified target proteins and acceptor lysines relevant for genome stability.</title>
        <authorList>
            <person name="Xiao Z."/>
            <person name="Chang J.G."/>
            <person name="Hendriks I.A."/>
            <person name="Sigurdsson J.O."/>
            <person name="Olsen J.V."/>
            <person name="Vertegaal A.C."/>
        </authorList>
    </citation>
    <scope>SUMOYLATION [LARGE SCALE ANALYSIS] AT LYS-82 AND LYS-139</scope>
    <scope>IDENTIFICATION BY MASS SPECTROMETRY [LARGE SCALE ANALYSIS]</scope>
</reference>
<reference key="11">
    <citation type="journal article" date="2017" name="Nat. Struct. Mol. Biol.">
        <title>Site-specific mapping of the human SUMO proteome reveals co-modification with phosphorylation.</title>
        <authorList>
            <person name="Hendriks I.A."/>
            <person name="Lyon D."/>
            <person name="Young C."/>
            <person name="Jensen L.J."/>
            <person name="Vertegaal A.C."/>
            <person name="Nielsen M.L."/>
        </authorList>
    </citation>
    <scope>SUMOYLATION [LARGE SCALE ANALYSIS] AT LYS-2; LYS-82; LYS-135; LYS-139; LYS-151; LYS-210; LYS-218 AND LYS-237</scope>
    <scope>IDENTIFICATION BY MASS SPECTROMETRY [LARGE SCALE ANALYSIS]</scope>
</reference>
<sequence>MKQSSNVPAFLSKLWTLVEETHTNEFITWSQNGQSFLVLDEQRFAKEILPKYFKHNNMASFVRQLNMYGFRKVVHIDSGIVKQERDGPVEFQHPYFKQGQDDLLENIKRKVSSSKPEENKIRQEDLTKIISSAQKVQIKQETIESRLSELKSENESLWKEVSELRAKHAQQQQVIRKIVQFIVTLVQNNQLVSLKRKRPLLLNTNGAQKKNLFQHIVKEPTDNHHHKVPHSRTEGLKPRERISDDIIIYDVTDDNADEENIPVIPETNEDVISDPSNCSQYPDIVIVEDDNEDEYAPVIQSGEQNEPARESLSSGSDGSSPLMSSAVQLNGSSSLTSEDPVTMMDSILNDNINLLGKVELLDYLDSIDCSLEDFQAMLSGRQFSIDPDLLVDLFTSSVQMNPTDYINNTKSENKGLETTKNNVVQPVSEEGRKSKSKPDKQLIQYTAFPLLAFLDGNPASSVEQASTTASSEVLSSVDKPIEVDELLDSSLDPEPTQSKLVRLEPLTEAEASEATLFYLCELAPAPLDSDMPLLDS</sequence>
<protein>
    <recommendedName>
        <fullName>Heat shock factor protein 2</fullName>
        <shortName>HSF 2</shortName>
    </recommendedName>
    <alternativeName>
        <fullName>Heat shock transcription factor 2</fullName>
        <shortName>HSTF 2</shortName>
    </alternativeName>
</protein>
<feature type="chain" id="PRO_0000124569" description="Heat shock factor protein 2">
    <location>
        <begin position="1"/>
        <end position="536"/>
    </location>
</feature>
<feature type="DNA-binding region" evidence="1">
    <location>
        <begin position="7"/>
        <end position="112"/>
    </location>
</feature>
<feature type="region of interest" description="Hydrophobic repeat HR-A/B">
    <location>
        <begin position="119"/>
        <end position="192"/>
    </location>
</feature>
<feature type="region of interest" description="Disordered" evidence="3">
    <location>
        <begin position="300"/>
        <end position="337"/>
    </location>
</feature>
<feature type="region of interest" description="Hydrophobic repeat HR-C">
    <location>
        <begin position="360"/>
        <end position="385"/>
    </location>
</feature>
<feature type="region of interest" description="Disordered" evidence="3">
    <location>
        <begin position="407"/>
        <end position="438"/>
    </location>
</feature>
<feature type="short sequence motif" description="Nuclear localization signal" evidence="2">
    <location>
        <begin position="108"/>
        <end position="122"/>
    </location>
</feature>
<feature type="short sequence motif" description="Nuclear localization signal" evidence="2">
    <location>
        <begin position="195"/>
        <end position="210"/>
    </location>
</feature>
<feature type="compositionally biased region" description="Low complexity" evidence="3">
    <location>
        <begin position="311"/>
        <end position="325"/>
    </location>
</feature>
<feature type="compositionally biased region" description="Polar residues" evidence="3">
    <location>
        <begin position="326"/>
        <end position="337"/>
    </location>
</feature>
<feature type="compositionally biased region" description="Basic and acidic residues" evidence="3">
    <location>
        <begin position="429"/>
        <end position="438"/>
    </location>
</feature>
<feature type="cross-link" description="Glycyl lysine isopeptide (Lys-Gly) (interchain with G-Cter in SUMO2)" evidence="11">
    <location>
        <position position="2"/>
    </location>
</feature>
<feature type="cross-link" description="Glycyl lysine isopeptide (Lys-Gly) (interchain with G-Cter in SUMO2)" evidence="8 9 10 11">
    <location>
        <position position="82"/>
    </location>
</feature>
<feature type="cross-link" description="Glycyl lysine isopeptide (Lys-Gly) (interchain with G-Cter in SUMO2)" evidence="11">
    <location>
        <position position="135"/>
    </location>
</feature>
<feature type="cross-link" description="Glycyl lysine isopeptide (Lys-Gly) (interchain with G-Cter in SUMO2)" evidence="8 9 10 11">
    <location>
        <position position="139"/>
    </location>
</feature>
<feature type="cross-link" description="Glycyl lysine isopeptide (Lys-Gly) (interchain with G-Cter in SUMO2)" evidence="11">
    <location>
        <position position="151"/>
    </location>
</feature>
<feature type="cross-link" description="Glycyl lysine isopeptide (Lys-Gly) (interchain with G-Cter in SUMO2)" evidence="11">
    <location>
        <position position="210"/>
    </location>
</feature>
<feature type="cross-link" description="Glycyl lysine isopeptide (Lys-Gly) (interchain with G-Cter in SUMO2)" evidence="11">
    <location>
        <position position="218"/>
    </location>
</feature>
<feature type="cross-link" description="Glycyl lysine isopeptide (Lys-Gly) (interchain with G-Cter in SUMO2)" evidence="11">
    <location>
        <position position="237"/>
    </location>
</feature>
<feature type="splice variant" id="VSP_041128" description="In isoform 2." evidence="5 6">
    <location>
        <begin position="393"/>
        <end position="410"/>
    </location>
</feature>
<feature type="mutagenesis site" description="Fails to translocate to nucleus." evidence="4">
    <original>R</original>
    <variation>G</variation>
    <location>
        <position position="109"/>
    </location>
</feature>
<feature type="mutagenesis site" description="Fails to translocate to nucleus." evidence="4">
    <original>RKR</original>
    <variation>ASS</variation>
    <location>
        <begin position="196"/>
        <end position="198"/>
    </location>
</feature>
<feature type="helix" evidence="14">
    <location>
        <begin position="9"/>
        <end position="19"/>
    </location>
</feature>
<feature type="helix" evidence="14">
    <location>
        <begin position="21"/>
        <end position="23"/>
    </location>
</feature>
<feature type="turn" evidence="14">
    <location>
        <begin position="24"/>
        <end position="26"/>
    </location>
</feature>
<feature type="strand" evidence="14">
    <location>
        <begin position="27"/>
        <end position="30"/>
    </location>
</feature>
<feature type="turn" evidence="14">
    <location>
        <begin position="31"/>
        <end position="34"/>
    </location>
</feature>
<feature type="strand" evidence="14">
    <location>
        <begin position="35"/>
        <end position="39"/>
    </location>
</feature>
<feature type="helix" evidence="14">
    <location>
        <begin position="41"/>
        <end position="47"/>
    </location>
</feature>
<feature type="helix" evidence="14">
    <location>
        <begin position="49"/>
        <end position="53"/>
    </location>
</feature>
<feature type="helix" evidence="14">
    <location>
        <begin position="58"/>
        <end position="67"/>
    </location>
</feature>
<feature type="strand" evidence="14">
    <location>
        <begin position="71"/>
        <end position="73"/>
    </location>
</feature>
<feature type="strand" evidence="13">
    <location>
        <begin position="78"/>
        <end position="80"/>
    </location>
</feature>
<feature type="strand" evidence="12">
    <location>
        <begin position="83"/>
        <end position="85"/>
    </location>
</feature>
<feature type="strand" evidence="14">
    <location>
        <begin position="89"/>
        <end position="92"/>
    </location>
</feature>
<feature type="helix" evidence="14">
    <location>
        <begin position="101"/>
        <end position="106"/>
    </location>
</feature>
<proteinExistence type="evidence at protein level"/>
<evidence type="ECO:0000250" key="1"/>
<evidence type="ECO:0000255" key="2"/>
<evidence type="ECO:0000256" key="3">
    <source>
        <dbReference type="SAM" id="MobiDB-lite"/>
    </source>
</evidence>
<evidence type="ECO:0000269" key="4">
    <source>
    </source>
</evidence>
<evidence type="ECO:0000303" key="5">
    <source>
    </source>
</evidence>
<evidence type="ECO:0000303" key="6">
    <source>
    </source>
</evidence>
<evidence type="ECO:0000305" key="7"/>
<evidence type="ECO:0007744" key="8">
    <source>
    </source>
</evidence>
<evidence type="ECO:0007744" key="9">
    <source>
    </source>
</evidence>
<evidence type="ECO:0007744" key="10">
    <source>
    </source>
</evidence>
<evidence type="ECO:0007744" key="11">
    <source>
    </source>
</evidence>
<evidence type="ECO:0007829" key="12">
    <source>
        <dbReference type="PDB" id="5D8K"/>
    </source>
</evidence>
<evidence type="ECO:0007829" key="13">
    <source>
        <dbReference type="PDB" id="5D8L"/>
    </source>
</evidence>
<evidence type="ECO:0007829" key="14">
    <source>
        <dbReference type="PDB" id="5HDK"/>
    </source>
</evidence>
<accession>Q03933</accession>
<accession>B4DGJ4</accession>
<accession>Q0VAH9</accession>
<accession>Q2M1K4</accession>
<accession>Q9H445</accession>
<name>HSF2_HUMAN</name>
<dbReference type="EMBL" id="M65217">
    <property type="protein sequence ID" value="AAA36017.1"/>
    <property type="molecule type" value="mRNA"/>
</dbReference>
<dbReference type="EMBL" id="DQ492684">
    <property type="protein sequence ID" value="ABF47087.1"/>
    <property type="molecule type" value="Genomic_DNA"/>
</dbReference>
<dbReference type="EMBL" id="AK294624">
    <property type="protein sequence ID" value="BAG57805.1"/>
    <property type="molecule type" value="mRNA"/>
</dbReference>
<dbReference type="EMBL" id="AK316377">
    <property type="protein sequence ID" value="BAH14748.1"/>
    <property type="molecule type" value="mRNA"/>
</dbReference>
<dbReference type="EMBL" id="AL121954">
    <property type="status" value="NOT_ANNOTATED_CDS"/>
    <property type="molecule type" value="Genomic_DNA"/>
</dbReference>
<dbReference type="EMBL" id="Z99129">
    <property type="status" value="NOT_ANNOTATED_CDS"/>
    <property type="molecule type" value="Genomic_DNA"/>
</dbReference>
<dbReference type="EMBL" id="CH471051">
    <property type="protein sequence ID" value="EAW48176.1"/>
    <property type="molecule type" value="Genomic_DNA"/>
</dbReference>
<dbReference type="EMBL" id="BC112323">
    <property type="protein sequence ID" value="AAI12324.1"/>
    <property type="molecule type" value="mRNA"/>
</dbReference>
<dbReference type="EMBL" id="BC121050">
    <property type="protein sequence ID" value="AAI21051.1"/>
    <property type="molecule type" value="mRNA"/>
</dbReference>
<dbReference type="EMBL" id="BC121051">
    <property type="protein sequence ID" value="AAI21052.1"/>
    <property type="molecule type" value="mRNA"/>
</dbReference>
<dbReference type="EMBL" id="BC128420">
    <property type="protein sequence ID" value="AAI28421.1"/>
    <property type="molecule type" value="mRNA"/>
</dbReference>
<dbReference type="CCDS" id="CCDS47470.1">
    <molecule id="Q03933-2"/>
</dbReference>
<dbReference type="CCDS" id="CCDS5124.1">
    <molecule id="Q03933-1"/>
</dbReference>
<dbReference type="PIR" id="A41138">
    <property type="entry name" value="A41138"/>
</dbReference>
<dbReference type="RefSeq" id="NP_001129036.1">
    <molecule id="Q03933-2"/>
    <property type="nucleotide sequence ID" value="NM_001135564.1"/>
</dbReference>
<dbReference type="RefSeq" id="NP_004497.1">
    <molecule id="Q03933-1"/>
    <property type="nucleotide sequence ID" value="NM_004506.4"/>
</dbReference>
<dbReference type="PDB" id="5D8K">
    <property type="method" value="X-ray"/>
    <property type="resolution" value="1.73 A"/>
    <property type="chains" value="B=8-115"/>
</dbReference>
<dbReference type="PDB" id="5D8L">
    <property type="method" value="X-ray"/>
    <property type="resolution" value="2.07 A"/>
    <property type="chains" value="B/D/F/H=8-115"/>
</dbReference>
<dbReference type="PDB" id="5HDK">
    <property type="method" value="X-ray"/>
    <property type="resolution" value="1.32 A"/>
    <property type="chains" value="A/B/C/D=7-112"/>
</dbReference>
<dbReference type="PDB" id="7DCI">
    <property type="method" value="X-ray"/>
    <property type="resolution" value="1.70 A"/>
    <property type="chains" value="A=7-110"/>
</dbReference>
<dbReference type="PDB" id="7DCU">
    <property type="method" value="X-ray"/>
    <property type="resolution" value="1.75 A"/>
    <property type="chains" value="A/B/C=7-112"/>
</dbReference>
<dbReference type="PDBsum" id="5D8K"/>
<dbReference type="PDBsum" id="5D8L"/>
<dbReference type="PDBsum" id="5HDK"/>
<dbReference type="PDBsum" id="7DCI"/>
<dbReference type="PDBsum" id="7DCU"/>
<dbReference type="SMR" id="Q03933"/>
<dbReference type="BioGRID" id="109531">
    <property type="interactions" value="76"/>
</dbReference>
<dbReference type="CORUM" id="Q03933"/>
<dbReference type="DIP" id="DIP-56593N"/>
<dbReference type="FunCoup" id="Q03933">
    <property type="interactions" value="2079"/>
</dbReference>
<dbReference type="IntAct" id="Q03933">
    <property type="interactions" value="98"/>
</dbReference>
<dbReference type="STRING" id="9606.ENSP00000357440"/>
<dbReference type="ChEMBL" id="CHEMBL3988631"/>
<dbReference type="GlyGen" id="Q03933">
    <property type="glycosylation" value="1 site"/>
</dbReference>
<dbReference type="iPTMnet" id="Q03933"/>
<dbReference type="PhosphoSitePlus" id="Q03933"/>
<dbReference type="BioMuta" id="HSF2"/>
<dbReference type="DMDM" id="462334"/>
<dbReference type="jPOST" id="Q03933"/>
<dbReference type="MassIVE" id="Q03933"/>
<dbReference type="PaxDb" id="9606-ENSP00000357440"/>
<dbReference type="PeptideAtlas" id="Q03933"/>
<dbReference type="ProteomicsDB" id="58228">
    <molecule id="Q03933-1"/>
</dbReference>
<dbReference type="ProteomicsDB" id="58229">
    <molecule id="Q03933-2"/>
</dbReference>
<dbReference type="Pumba" id="Q03933"/>
<dbReference type="Antibodypedia" id="4231">
    <property type="antibodies" value="689 antibodies from 39 providers"/>
</dbReference>
<dbReference type="DNASU" id="3298"/>
<dbReference type="Ensembl" id="ENST00000368455.9">
    <molecule id="Q03933-1"/>
    <property type="protein sequence ID" value="ENSP00000357440.4"/>
    <property type="gene ID" value="ENSG00000025156.13"/>
</dbReference>
<dbReference type="Ensembl" id="ENST00000452194.5">
    <molecule id="Q03933-2"/>
    <property type="protein sequence ID" value="ENSP00000400380.1"/>
    <property type="gene ID" value="ENSG00000025156.13"/>
</dbReference>
<dbReference type="GeneID" id="3298"/>
<dbReference type="KEGG" id="hsa:3298"/>
<dbReference type="MANE-Select" id="ENST00000368455.9">
    <property type="protein sequence ID" value="ENSP00000357440.4"/>
    <property type="RefSeq nucleotide sequence ID" value="NM_004506.4"/>
    <property type="RefSeq protein sequence ID" value="NP_004497.1"/>
</dbReference>
<dbReference type="UCSC" id="uc003pyu.3">
    <molecule id="Q03933-1"/>
    <property type="organism name" value="human"/>
</dbReference>
<dbReference type="AGR" id="HGNC:5225"/>
<dbReference type="CTD" id="3298"/>
<dbReference type="DisGeNET" id="3298"/>
<dbReference type="GeneCards" id="HSF2"/>
<dbReference type="HGNC" id="HGNC:5225">
    <property type="gene designation" value="HSF2"/>
</dbReference>
<dbReference type="HPA" id="ENSG00000025156">
    <property type="expression patterns" value="Low tissue specificity"/>
</dbReference>
<dbReference type="MIM" id="140581">
    <property type="type" value="gene"/>
</dbReference>
<dbReference type="neXtProt" id="NX_Q03933"/>
<dbReference type="OpenTargets" id="ENSG00000025156"/>
<dbReference type="PharmGKB" id="PA29494"/>
<dbReference type="VEuPathDB" id="HostDB:ENSG00000025156"/>
<dbReference type="eggNOG" id="KOG0627">
    <property type="taxonomic scope" value="Eukaryota"/>
</dbReference>
<dbReference type="GeneTree" id="ENSGT00940000155906"/>
<dbReference type="HOGENOM" id="CLU_038829_1_0_1"/>
<dbReference type="InParanoid" id="Q03933"/>
<dbReference type="OMA" id="GKQCGID"/>
<dbReference type="OrthoDB" id="60033at2759"/>
<dbReference type="PAN-GO" id="Q03933">
    <property type="GO annotations" value="4 GO annotations based on evolutionary models"/>
</dbReference>
<dbReference type="PhylomeDB" id="Q03933"/>
<dbReference type="TreeFam" id="TF330401"/>
<dbReference type="PathwayCommons" id="Q03933"/>
<dbReference type="SignaLink" id="Q03933"/>
<dbReference type="SIGNOR" id="Q03933"/>
<dbReference type="BioGRID-ORCS" id="3298">
    <property type="hits" value="36 hits in 1182 CRISPR screens"/>
</dbReference>
<dbReference type="CD-CODE" id="81D2A7B6">
    <property type="entry name" value="Nuclear stress body"/>
</dbReference>
<dbReference type="ChiTaRS" id="HSF2">
    <property type="organism name" value="human"/>
</dbReference>
<dbReference type="GeneWiki" id="HSF2"/>
<dbReference type="GenomeRNAi" id="3298"/>
<dbReference type="Pharos" id="Q03933">
    <property type="development level" value="Tbio"/>
</dbReference>
<dbReference type="PRO" id="PR:Q03933"/>
<dbReference type="Proteomes" id="UP000005640">
    <property type="component" value="Chromosome 6"/>
</dbReference>
<dbReference type="RNAct" id="Q03933">
    <property type="molecule type" value="protein"/>
</dbReference>
<dbReference type="Bgee" id="ENSG00000025156">
    <property type="expression patterns" value="Expressed in male germ line stem cell (sensu Vertebrata) in testis and 200 other cell types or tissues"/>
</dbReference>
<dbReference type="ExpressionAtlas" id="Q03933">
    <property type="expression patterns" value="baseline and differential"/>
</dbReference>
<dbReference type="GO" id="GO:0000785">
    <property type="term" value="C:chromatin"/>
    <property type="evidence" value="ECO:0000247"/>
    <property type="project" value="NTNU_SB"/>
</dbReference>
<dbReference type="GO" id="GO:0005737">
    <property type="term" value="C:cytoplasm"/>
    <property type="evidence" value="ECO:0007669"/>
    <property type="project" value="UniProtKB-SubCell"/>
</dbReference>
<dbReference type="GO" id="GO:0005654">
    <property type="term" value="C:nucleoplasm"/>
    <property type="evidence" value="ECO:0000314"/>
    <property type="project" value="HPA"/>
</dbReference>
<dbReference type="GO" id="GO:0001228">
    <property type="term" value="F:DNA-binding transcription activator activity, RNA polymerase II-specific"/>
    <property type="evidence" value="ECO:0000314"/>
    <property type="project" value="NTNU_SB"/>
</dbReference>
<dbReference type="GO" id="GO:0000981">
    <property type="term" value="F:DNA-binding transcription factor activity, RNA polymerase II-specific"/>
    <property type="evidence" value="ECO:0000247"/>
    <property type="project" value="NTNU_SB"/>
</dbReference>
<dbReference type="GO" id="GO:0042802">
    <property type="term" value="F:identical protein binding"/>
    <property type="evidence" value="ECO:0007669"/>
    <property type="project" value="Ensembl"/>
</dbReference>
<dbReference type="GO" id="GO:0000978">
    <property type="term" value="F:RNA polymerase II cis-regulatory region sequence-specific DNA binding"/>
    <property type="evidence" value="ECO:0000314"/>
    <property type="project" value="ARUK-UCL"/>
</dbReference>
<dbReference type="GO" id="GO:0001162">
    <property type="term" value="F:RNA polymerase II intronic transcription regulatory region sequence-specific DNA binding"/>
    <property type="evidence" value="ECO:0000314"/>
    <property type="project" value="MGI"/>
</dbReference>
<dbReference type="GO" id="GO:0000977">
    <property type="term" value="F:RNA polymerase II transcription regulatory region sequence-specific DNA binding"/>
    <property type="evidence" value="ECO:0000314"/>
    <property type="project" value="NTNU_SB"/>
</dbReference>
<dbReference type="GO" id="GO:1990837">
    <property type="term" value="F:sequence-specific double-stranded DNA binding"/>
    <property type="evidence" value="ECO:0000314"/>
    <property type="project" value="ARUK-UCL"/>
</dbReference>
<dbReference type="GO" id="GO:0045944">
    <property type="term" value="P:positive regulation of transcription by RNA polymerase II"/>
    <property type="evidence" value="ECO:0000314"/>
    <property type="project" value="MGI"/>
</dbReference>
<dbReference type="GO" id="GO:0007283">
    <property type="term" value="P:spermatogenesis"/>
    <property type="evidence" value="ECO:0007669"/>
    <property type="project" value="Ensembl"/>
</dbReference>
<dbReference type="FunFam" id="1.10.10.10:FF:000027">
    <property type="entry name" value="Heat shock transcription factor 1"/>
    <property type="match status" value="1"/>
</dbReference>
<dbReference type="Gene3D" id="1.10.10.10">
    <property type="entry name" value="Winged helix-like DNA-binding domain superfamily/Winged helix DNA-binding domain"/>
    <property type="match status" value="1"/>
</dbReference>
<dbReference type="InterPro" id="IPR000232">
    <property type="entry name" value="HSF_DNA-bd"/>
</dbReference>
<dbReference type="InterPro" id="IPR010542">
    <property type="entry name" value="Vert_HSTF_C"/>
</dbReference>
<dbReference type="InterPro" id="IPR036388">
    <property type="entry name" value="WH-like_DNA-bd_sf"/>
</dbReference>
<dbReference type="InterPro" id="IPR036390">
    <property type="entry name" value="WH_DNA-bd_sf"/>
</dbReference>
<dbReference type="PANTHER" id="PTHR10015:SF185">
    <property type="entry name" value="HEAT SHOCK FACTOR PROTEIN 2"/>
    <property type="match status" value="1"/>
</dbReference>
<dbReference type="PANTHER" id="PTHR10015">
    <property type="entry name" value="HEAT SHOCK TRANSCRIPTION FACTOR"/>
    <property type="match status" value="1"/>
</dbReference>
<dbReference type="Pfam" id="PF00447">
    <property type="entry name" value="HSF_DNA-bind"/>
    <property type="match status" value="1"/>
</dbReference>
<dbReference type="Pfam" id="PF06546">
    <property type="entry name" value="Vert_HS_TF"/>
    <property type="match status" value="1"/>
</dbReference>
<dbReference type="PRINTS" id="PR00056">
    <property type="entry name" value="HSFDOMAIN"/>
</dbReference>
<dbReference type="SMART" id="SM00415">
    <property type="entry name" value="HSF"/>
    <property type="match status" value="1"/>
</dbReference>
<dbReference type="SUPFAM" id="SSF46785">
    <property type="entry name" value="Winged helix' DNA-binding domain"/>
    <property type="match status" value="1"/>
</dbReference>
<dbReference type="PROSITE" id="PS00434">
    <property type="entry name" value="HSF_DOMAIN"/>
    <property type="match status" value="1"/>
</dbReference>
<keyword id="KW-0002">3D-structure</keyword>
<keyword id="KW-0010">Activator</keyword>
<keyword id="KW-0025">Alternative splicing</keyword>
<keyword id="KW-0963">Cytoplasm</keyword>
<keyword id="KW-0903">Direct protein sequencing</keyword>
<keyword id="KW-0238">DNA-binding</keyword>
<keyword id="KW-1017">Isopeptide bond</keyword>
<keyword id="KW-0539">Nucleus</keyword>
<keyword id="KW-1267">Proteomics identification</keyword>
<keyword id="KW-1185">Reference proteome</keyword>
<keyword id="KW-0346">Stress response</keyword>
<keyword id="KW-0804">Transcription</keyword>
<keyword id="KW-0805">Transcription regulation</keyword>
<keyword id="KW-0832">Ubl conjugation</keyword>
<gene>
    <name type="primary">HSF2</name>
    <name type="synonym">HSTF2</name>
</gene>
<organism>
    <name type="scientific">Homo sapiens</name>
    <name type="common">Human</name>
    <dbReference type="NCBI Taxonomy" id="9606"/>
    <lineage>
        <taxon>Eukaryota</taxon>
        <taxon>Metazoa</taxon>
        <taxon>Chordata</taxon>
        <taxon>Craniata</taxon>
        <taxon>Vertebrata</taxon>
        <taxon>Euteleostomi</taxon>
        <taxon>Mammalia</taxon>
        <taxon>Eutheria</taxon>
        <taxon>Euarchontoglires</taxon>
        <taxon>Primates</taxon>
        <taxon>Haplorrhini</taxon>
        <taxon>Catarrhini</taxon>
        <taxon>Hominidae</taxon>
        <taxon>Homo</taxon>
    </lineage>
</organism>